<organism>
    <name type="scientific">Metarhizium rileyi (strain RCEF 4871)</name>
    <name type="common">Nomuraea rileyi</name>
    <dbReference type="NCBI Taxonomy" id="1649241"/>
    <lineage>
        <taxon>Eukaryota</taxon>
        <taxon>Fungi</taxon>
        <taxon>Dikarya</taxon>
        <taxon>Ascomycota</taxon>
        <taxon>Pezizomycotina</taxon>
        <taxon>Sordariomycetes</taxon>
        <taxon>Hypocreomycetidae</taxon>
        <taxon>Hypocreales</taxon>
        <taxon>Clavicipitaceae</taxon>
        <taxon>Metarhizium</taxon>
    </lineage>
</organism>
<keyword id="KW-0963">Cytoplasm</keyword>
<keyword id="KW-0479">Metal-binding</keyword>
<keyword id="KW-0539">Nucleus</keyword>
<keyword id="KW-1185">Reference proteome</keyword>
<keyword id="KW-0677">Repeat</keyword>
<keyword id="KW-0804">Transcription</keyword>
<keyword id="KW-0805">Transcription regulation</keyword>
<keyword id="KW-0843">Virulence</keyword>
<keyword id="KW-0862">Zinc</keyword>
<keyword id="KW-0863">Zinc-finger</keyword>
<proteinExistence type="evidence at transcript level"/>
<feature type="chain" id="PRO_0000462284" description="C2H2-type transcription factor MSN2">
    <location>
        <begin position="1"/>
        <end position="530"/>
    </location>
</feature>
<feature type="zinc finger region" description="C2H2-type 1" evidence="2">
    <location>
        <begin position="409"/>
        <end position="437"/>
    </location>
</feature>
<feature type="zinc finger region" description="C2H2-type 2" evidence="2">
    <location>
        <begin position="438"/>
        <end position="465"/>
    </location>
</feature>
<gene>
    <name evidence="4" type="primary">MSN2</name>
    <name type="ORF">NOR_04557</name>
</gene>
<name>MSN2_METRR</name>
<protein>
    <recommendedName>
        <fullName evidence="4">C2H2-type transcription factor MSN2</fullName>
    </recommendedName>
</protein>
<accession>A0A162LR42</accession>
<accession>A0A3S7JEA2</accession>
<dbReference type="EMBL" id="MG641238">
    <property type="protein sequence ID" value="AVR76212.1"/>
    <property type="molecule type" value="mRNA"/>
</dbReference>
<dbReference type="EMBL" id="AZHC01000012">
    <property type="protein sequence ID" value="OAA43190.1"/>
    <property type="molecule type" value="Genomic_DNA"/>
</dbReference>
<dbReference type="STRING" id="1081105.A0A162LR42"/>
<dbReference type="OMA" id="PFFYYNP"/>
<dbReference type="OrthoDB" id="654211at2759"/>
<dbReference type="Proteomes" id="UP000243498">
    <property type="component" value="Unassembled WGS sequence"/>
</dbReference>
<dbReference type="GO" id="GO:0005634">
    <property type="term" value="C:nucleus"/>
    <property type="evidence" value="ECO:0007669"/>
    <property type="project" value="TreeGrafter"/>
</dbReference>
<dbReference type="GO" id="GO:0000981">
    <property type="term" value="F:DNA-binding transcription factor activity, RNA polymerase II-specific"/>
    <property type="evidence" value="ECO:0007669"/>
    <property type="project" value="TreeGrafter"/>
</dbReference>
<dbReference type="GO" id="GO:0000977">
    <property type="term" value="F:RNA polymerase II transcription regulatory region sequence-specific DNA binding"/>
    <property type="evidence" value="ECO:0007669"/>
    <property type="project" value="TreeGrafter"/>
</dbReference>
<dbReference type="GO" id="GO:0008270">
    <property type="term" value="F:zinc ion binding"/>
    <property type="evidence" value="ECO:0007669"/>
    <property type="project" value="UniProtKB-KW"/>
</dbReference>
<dbReference type="FunFam" id="3.30.160.60:FF:000141">
    <property type="entry name" value="C2H2 zinc finger protein"/>
    <property type="match status" value="1"/>
</dbReference>
<dbReference type="FunFam" id="3.30.160.60:FF:000243">
    <property type="entry name" value="Probable transcription factor steA"/>
    <property type="match status" value="1"/>
</dbReference>
<dbReference type="Gene3D" id="3.30.160.60">
    <property type="entry name" value="Classic Zinc Finger"/>
    <property type="match status" value="2"/>
</dbReference>
<dbReference type="InterPro" id="IPR036236">
    <property type="entry name" value="Znf_C2H2_sf"/>
</dbReference>
<dbReference type="InterPro" id="IPR013087">
    <property type="entry name" value="Znf_C2H2_type"/>
</dbReference>
<dbReference type="PANTHER" id="PTHR24409:SF295">
    <property type="entry name" value="AZ2-RELATED"/>
    <property type="match status" value="1"/>
</dbReference>
<dbReference type="PANTHER" id="PTHR24409">
    <property type="entry name" value="ZINC FINGER PROTEIN 142"/>
    <property type="match status" value="1"/>
</dbReference>
<dbReference type="Pfam" id="PF00096">
    <property type="entry name" value="zf-C2H2"/>
    <property type="match status" value="2"/>
</dbReference>
<dbReference type="SMART" id="SM00355">
    <property type="entry name" value="ZnF_C2H2"/>
    <property type="match status" value="2"/>
</dbReference>
<dbReference type="SUPFAM" id="SSF57667">
    <property type="entry name" value="beta-beta-alpha zinc fingers"/>
    <property type="match status" value="1"/>
</dbReference>
<dbReference type="PROSITE" id="PS00028">
    <property type="entry name" value="ZINC_FINGER_C2H2_1"/>
    <property type="match status" value="2"/>
</dbReference>
<dbReference type="PROSITE" id="PS50157">
    <property type="entry name" value="ZINC_FINGER_C2H2_2"/>
    <property type="match status" value="2"/>
</dbReference>
<evidence type="ECO:0000250" key="1">
    <source>
        <dbReference type="UniProtKB" id="G4NBR8"/>
    </source>
</evidence>
<evidence type="ECO:0000255" key="2">
    <source>
        <dbReference type="PROSITE-ProRule" id="PRU00042"/>
    </source>
</evidence>
<evidence type="ECO:0000269" key="3">
    <source>
    </source>
</evidence>
<evidence type="ECO:0000303" key="4">
    <source>
    </source>
</evidence>
<comment type="function">
    <text evidence="3">Transcription factor that acts as a key downstream transcription factor in the HOG1-MAPK pathway (PubMed:30160031). Plays crucial roles in the regulation of dimorphism transition, aggravated pigmentation, conidiation, microsclerotia formation and subsequent virulence towards Spodoptera litura larvae (PubMed:30160031). More specifically regulates the expression of genes involved in antioxidation, pigment biosynthesis and ion transport and storage (PubMed:30160031).</text>
</comment>
<comment type="subcellular location">
    <subcellularLocation>
        <location evidence="1">Nucleus</location>
    </subcellularLocation>
    <subcellularLocation>
        <location evidence="1">Cytoplasm</location>
    </subcellularLocation>
</comment>
<comment type="disruption phenotype">
    <text evidence="3">Increases the yeast-to-hypha transition rate, enhances conidiation capacity and aggravates pigmentation (PubMed:30160031). Leads to sensitivity to stress (PubMed:30160031). Significantly reduces microsclerotia formation and decreases virulence levels (PubMed:30160031).</text>
</comment>
<reference key="1">
    <citation type="journal article" date="2018" name="Microb. Biotechnol.">
        <title>A transcription factor, MrMsn2, in the dimorphic fungus Metarhizium rileyi is essential for dimorphism transition, aggravated pigmentation, conidiation and microsclerotia formation.</title>
        <authorList>
            <person name="Song Z."/>
            <person name="Yang J."/>
            <person name="Xin C."/>
            <person name="Xing X."/>
            <person name="Yuan Q."/>
            <person name="Yin Y."/>
            <person name="Wang Z."/>
        </authorList>
    </citation>
    <scope>NUCLEOTIDE SEQUENCE [MRNA]</scope>
    <scope>FUNCTION</scope>
    <scope>DISRUPTION PHENOTYPE</scope>
    <source>
        <strain>CQNr01</strain>
    </source>
</reference>
<reference key="2">
    <citation type="journal article" date="2016" name="Genome Biol. Evol.">
        <title>Divergent and convergent evolution of fungal pathogenicity.</title>
        <authorList>
            <person name="Shang Y."/>
            <person name="Xiao G."/>
            <person name="Zheng P."/>
            <person name="Cen K."/>
            <person name="Zhan S."/>
            <person name="Wang C."/>
        </authorList>
    </citation>
    <scope>NUCLEOTIDE SEQUENCE [LARGE SCALE GENOMIC DNA]</scope>
    <source>
        <strain>RCEF 4871</strain>
    </source>
</reference>
<sequence>MDSTMMPHTIRQNTIFGKTNFAQQKLGLYQVVAPASPVCSRPGSSCSQPPTLLGNNPGVLTPTGSLSPSSFKPAIMLETEFGDNPYYPSTPPLSTSGSAVGSPKSCDILQTPLNPMFSGLDGFSGVKSGFESIESSILSWTSCDSPPMTPVYIYSQPSRVPSLSSTTSDLSNIPCPSLSPSPAPYARSVSSENDVDFCDPRNLTVSCTSNPSLSDFTLDCLIEEDSSCSEQGSIDTSVIVQPTFDFSPAIASGLPAFEDFSDFESDNELSSLVKSGGVYRPRACTGSSVVSLGHGSFIGEEDFSLDENETLRFPSPSPPSIKPVDNSHKGKRRKKSSEDTRSVEPVMNTAATAADESQTVEVEQSDRASPAPSESNSSAGADTPSAPLPAPTNRRGRKQSLTEDPSKTFVCDLCNRRFRRQEHLKRHYRSLHTQEKPFECNECGKKFSRSDNLAQHARTHASGGAIVMNLIDNVDPSAYDAGVVAPPSVDDHANYGKVLFQIASEVPGSASELSSEEASDNGKKKRKRSD</sequence>